<keyword id="KW-0150">Chloroplast</keyword>
<keyword id="KW-0934">Plastid</keyword>
<keyword id="KW-0687">Ribonucleoprotein</keyword>
<keyword id="KW-0689">Ribosomal protein</keyword>
<keyword id="KW-0694">RNA-binding</keyword>
<keyword id="KW-0699">rRNA-binding</keyword>
<geneLocation type="chloroplast"/>
<accession>Q5SD10</accession>
<proteinExistence type="inferred from homology"/>
<protein>
    <recommendedName>
        <fullName evidence="1">Small ribosomal subunit protein uS14c</fullName>
    </recommendedName>
    <alternativeName>
        <fullName evidence="2">30S ribosomal protein S14, chloroplastic</fullName>
    </alternativeName>
</protein>
<sequence>MAKKSLIQREKKRQELKQKYHSIRLYLKKRMSEASLLDEKWEISEKLQSLPRNSAPTRLHRRCLLTGRSRANYRDFGLSRHVLREMAHACLLPGVIKSSW</sequence>
<feature type="chain" id="PRO_0000276681" description="Small ribosomal subunit protein uS14c">
    <location>
        <begin position="1"/>
        <end position="100"/>
    </location>
</feature>
<organism>
    <name type="scientific">Huperzia lucidula</name>
    <name type="common">Shining clubmoss</name>
    <name type="synonym">Lycopodium lucidulum</name>
    <dbReference type="NCBI Taxonomy" id="37429"/>
    <lineage>
        <taxon>Eukaryota</taxon>
        <taxon>Viridiplantae</taxon>
        <taxon>Streptophyta</taxon>
        <taxon>Embryophyta</taxon>
        <taxon>Tracheophyta</taxon>
        <taxon>Lycopodiopsida</taxon>
        <taxon>Lycopodiales</taxon>
        <taxon>Lycopodiaceae</taxon>
        <taxon>Huperzioideae</taxon>
        <taxon>Huperzia</taxon>
    </lineage>
</organism>
<dbReference type="EMBL" id="AY660566">
    <property type="protein sequence ID" value="AAT80727.1"/>
    <property type="molecule type" value="Genomic_DNA"/>
</dbReference>
<dbReference type="RefSeq" id="YP_209531.1">
    <property type="nucleotide sequence ID" value="NC_006861.1"/>
</dbReference>
<dbReference type="SMR" id="Q5SD10"/>
<dbReference type="GeneID" id="3283731"/>
<dbReference type="GO" id="GO:0009507">
    <property type="term" value="C:chloroplast"/>
    <property type="evidence" value="ECO:0007669"/>
    <property type="project" value="UniProtKB-SubCell"/>
</dbReference>
<dbReference type="GO" id="GO:0015935">
    <property type="term" value="C:small ribosomal subunit"/>
    <property type="evidence" value="ECO:0007669"/>
    <property type="project" value="TreeGrafter"/>
</dbReference>
<dbReference type="GO" id="GO:0019843">
    <property type="term" value="F:rRNA binding"/>
    <property type="evidence" value="ECO:0007669"/>
    <property type="project" value="UniProtKB-UniRule"/>
</dbReference>
<dbReference type="GO" id="GO:0003735">
    <property type="term" value="F:structural constituent of ribosome"/>
    <property type="evidence" value="ECO:0007669"/>
    <property type="project" value="InterPro"/>
</dbReference>
<dbReference type="GO" id="GO:0006412">
    <property type="term" value="P:translation"/>
    <property type="evidence" value="ECO:0007669"/>
    <property type="project" value="UniProtKB-UniRule"/>
</dbReference>
<dbReference type="FunFam" id="1.10.287.1480:FF:000001">
    <property type="entry name" value="30S ribosomal protein S14"/>
    <property type="match status" value="1"/>
</dbReference>
<dbReference type="Gene3D" id="1.10.287.1480">
    <property type="match status" value="1"/>
</dbReference>
<dbReference type="HAMAP" id="MF_00537">
    <property type="entry name" value="Ribosomal_uS14_1"/>
    <property type="match status" value="1"/>
</dbReference>
<dbReference type="InterPro" id="IPR001209">
    <property type="entry name" value="Ribosomal_uS14"/>
</dbReference>
<dbReference type="InterPro" id="IPR023036">
    <property type="entry name" value="Ribosomal_uS14_bac/plastid"/>
</dbReference>
<dbReference type="InterPro" id="IPR018271">
    <property type="entry name" value="Ribosomal_uS14_CS"/>
</dbReference>
<dbReference type="NCBIfam" id="NF006477">
    <property type="entry name" value="PRK08881.1"/>
    <property type="match status" value="1"/>
</dbReference>
<dbReference type="PANTHER" id="PTHR19836">
    <property type="entry name" value="30S RIBOSOMAL PROTEIN S14"/>
    <property type="match status" value="1"/>
</dbReference>
<dbReference type="PANTHER" id="PTHR19836:SF19">
    <property type="entry name" value="SMALL RIBOSOMAL SUBUNIT PROTEIN US14M"/>
    <property type="match status" value="1"/>
</dbReference>
<dbReference type="Pfam" id="PF00253">
    <property type="entry name" value="Ribosomal_S14"/>
    <property type="match status" value="1"/>
</dbReference>
<dbReference type="SUPFAM" id="SSF57716">
    <property type="entry name" value="Glucocorticoid receptor-like (DNA-binding domain)"/>
    <property type="match status" value="1"/>
</dbReference>
<dbReference type="PROSITE" id="PS00527">
    <property type="entry name" value="RIBOSOMAL_S14"/>
    <property type="match status" value="1"/>
</dbReference>
<gene>
    <name evidence="1" type="primary">rps14</name>
</gene>
<evidence type="ECO:0000255" key="1">
    <source>
        <dbReference type="HAMAP-Rule" id="MF_00537"/>
    </source>
</evidence>
<evidence type="ECO:0000305" key="2"/>
<reference key="1">
    <citation type="journal article" date="2005" name="Gene">
        <title>The first complete chloroplast genome sequence of a lycophyte, Huperzia lucidula (Lycopodiaceae).</title>
        <authorList>
            <person name="Wolf P.G."/>
            <person name="Karol K.G."/>
            <person name="Mandoli D.F."/>
            <person name="Kuehl J.V."/>
            <person name="Arumuganathan K."/>
            <person name="Ellis M.W."/>
            <person name="Mishler B.D."/>
            <person name="Kelch D.G."/>
            <person name="Olmstead R.G."/>
            <person name="Boore J.L."/>
        </authorList>
    </citation>
    <scope>NUCLEOTIDE SEQUENCE [LARGE SCALE GENOMIC DNA]</scope>
</reference>
<name>RR14_HUPLU</name>
<comment type="function">
    <text evidence="1">Binds 16S rRNA, required for the assembly of 30S particles.</text>
</comment>
<comment type="subunit">
    <text evidence="1">Part of the 30S ribosomal subunit.</text>
</comment>
<comment type="subcellular location">
    <subcellularLocation>
        <location>Plastid</location>
        <location>Chloroplast</location>
    </subcellularLocation>
</comment>
<comment type="similarity">
    <text evidence="1">Belongs to the universal ribosomal protein uS14 family.</text>
</comment>